<protein>
    <recommendedName>
        <fullName evidence="1">GTPase Obg</fullName>
        <ecNumber evidence="1">3.6.5.-</ecNumber>
    </recommendedName>
    <alternativeName>
        <fullName evidence="1">GTP-binding protein Obg</fullName>
    </alternativeName>
</protein>
<comment type="function">
    <text evidence="1">An essential GTPase which binds GTP, GDP and possibly (p)ppGpp with moderate affinity, with high nucleotide exchange rates and a fairly low GTP hydrolysis rate. Plays a role in control of the cell cycle, stress response, ribosome biogenesis and in those bacteria that undergo differentiation, in morphogenesis control.</text>
</comment>
<comment type="cofactor">
    <cofactor evidence="1">
        <name>Mg(2+)</name>
        <dbReference type="ChEBI" id="CHEBI:18420"/>
    </cofactor>
</comment>
<comment type="subunit">
    <text evidence="1">Monomer.</text>
</comment>
<comment type="subcellular location">
    <subcellularLocation>
        <location evidence="1">Cytoplasm</location>
    </subcellularLocation>
</comment>
<comment type="similarity">
    <text evidence="1">Belongs to the TRAFAC class OBG-HflX-like GTPase superfamily. OBG GTPase family.</text>
</comment>
<dbReference type="EC" id="3.6.5.-" evidence="1"/>
<dbReference type="EMBL" id="CP000112">
    <property type="protein sequence ID" value="ABB39486.2"/>
    <property type="molecule type" value="Genomic_DNA"/>
</dbReference>
<dbReference type="RefSeq" id="WP_011368515.1">
    <property type="nucleotide sequence ID" value="NC_007519.1"/>
</dbReference>
<dbReference type="SMR" id="Q30XW0"/>
<dbReference type="STRING" id="207559.Dde_2690"/>
<dbReference type="KEGG" id="dde:Dde_2690"/>
<dbReference type="eggNOG" id="COG0536">
    <property type="taxonomic scope" value="Bacteria"/>
</dbReference>
<dbReference type="HOGENOM" id="CLU_011747_2_0_7"/>
<dbReference type="Proteomes" id="UP000002710">
    <property type="component" value="Chromosome"/>
</dbReference>
<dbReference type="GO" id="GO:0005737">
    <property type="term" value="C:cytoplasm"/>
    <property type="evidence" value="ECO:0007669"/>
    <property type="project" value="UniProtKB-SubCell"/>
</dbReference>
<dbReference type="GO" id="GO:0005525">
    <property type="term" value="F:GTP binding"/>
    <property type="evidence" value="ECO:0007669"/>
    <property type="project" value="UniProtKB-UniRule"/>
</dbReference>
<dbReference type="GO" id="GO:0003924">
    <property type="term" value="F:GTPase activity"/>
    <property type="evidence" value="ECO:0007669"/>
    <property type="project" value="UniProtKB-UniRule"/>
</dbReference>
<dbReference type="GO" id="GO:0000287">
    <property type="term" value="F:magnesium ion binding"/>
    <property type="evidence" value="ECO:0007669"/>
    <property type="project" value="InterPro"/>
</dbReference>
<dbReference type="GO" id="GO:0042254">
    <property type="term" value="P:ribosome biogenesis"/>
    <property type="evidence" value="ECO:0007669"/>
    <property type="project" value="UniProtKB-UniRule"/>
</dbReference>
<dbReference type="CDD" id="cd01898">
    <property type="entry name" value="Obg"/>
    <property type="match status" value="1"/>
</dbReference>
<dbReference type="FunFam" id="2.70.210.12:FF:000001">
    <property type="entry name" value="GTPase Obg"/>
    <property type="match status" value="1"/>
</dbReference>
<dbReference type="Gene3D" id="2.70.210.12">
    <property type="entry name" value="GTP1/OBG domain"/>
    <property type="match status" value="1"/>
</dbReference>
<dbReference type="Gene3D" id="3.40.50.300">
    <property type="entry name" value="P-loop containing nucleotide triphosphate hydrolases"/>
    <property type="match status" value="1"/>
</dbReference>
<dbReference type="HAMAP" id="MF_01454">
    <property type="entry name" value="GTPase_Obg"/>
    <property type="match status" value="1"/>
</dbReference>
<dbReference type="InterPro" id="IPR031167">
    <property type="entry name" value="G_OBG"/>
</dbReference>
<dbReference type="InterPro" id="IPR006073">
    <property type="entry name" value="GTP-bd"/>
</dbReference>
<dbReference type="InterPro" id="IPR014100">
    <property type="entry name" value="GTP-bd_Obg/CgtA"/>
</dbReference>
<dbReference type="InterPro" id="IPR006074">
    <property type="entry name" value="GTP1-OBG_CS"/>
</dbReference>
<dbReference type="InterPro" id="IPR006169">
    <property type="entry name" value="GTP1_OBG_dom"/>
</dbReference>
<dbReference type="InterPro" id="IPR036726">
    <property type="entry name" value="GTP1_OBG_dom_sf"/>
</dbReference>
<dbReference type="InterPro" id="IPR045086">
    <property type="entry name" value="OBG_GTPase"/>
</dbReference>
<dbReference type="InterPro" id="IPR027417">
    <property type="entry name" value="P-loop_NTPase"/>
</dbReference>
<dbReference type="NCBIfam" id="TIGR02729">
    <property type="entry name" value="Obg_CgtA"/>
    <property type="match status" value="1"/>
</dbReference>
<dbReference type="NCBIfam" id="NF008955">
    <property type="entry name" value="PRK12297.1"/>
    <property type="match status" value="1"/>
</dbReference>
<dbReference type="NCBIfam" id="NF008956">
    <property type="entry name" value="PRK12299.1"/>
    <property type="match status" value="1"/>
</dbReference>
<dbReference type="PANTHER" id="PTHR11702">
    <property type="entry name" value="DEVELOPMENTALLY REGULATED GTP-BINDING PROTEIN-RELATED"/>
    <property type="match status" value="1"/>
</dbReference>
<dbReference type="PANTHER" id="PTHR11702:SF31">
    <property type="entry name" value="MITOCHONDRIAL RIBOSOME-ASSOCIATED GTPASE 2"/>
    <property type="match status" value="1"/>
</dbReference>
<dbReference type="Pfam" id="PF01018">
    <property type="entry name" value="GTP1_OBG"/>
    <property type="match status" value="1"/>
</dbReference>
<dbReference type="Pfam" id="PF01926">
    <property type="entry name" value="MMR_HSR1"/>
    <property type="match status" value="1"/>
</dbReference>
<dbReference type="PIRSF" id="PIRSF002401">
    <property type="entry name" value="GTP_bd_Obg/CgtA"/>
    <property type="match status" value="1"/>
</dbReference>
<dbReference type="PRINTS" id="PR00326">
    <property type="entry name" value="GTP1OBG"/>
</dbReference>
<dbReference type="SUPFAM" id="SSF82051">
    <property type="entry name" value="Obg GTP-binding protein N-terminal domain"/>
    <property type="match status" value="1"/>
</dbReference>
<dbReference type="SUPFAM" id="SSF52540">
    <property type="entry name" value="P-loop containing nucleoside triphosphate hydrolases"/>
    <property type="match status" value="1"/>
</dbReference>
<dbReference type="PROSITE" id="PS51710">
    <property type="entry name" value="G_OBG"/>
    <property type="match status" value="1"/>
</dbReference>
<dbReference type="PROSITE" id="PS00905">
    <property type="entry name" value="GTP1_OBG"/>
    <property type="match status" value="1"/>
</dbReference>
<dbReference type="PROSITE" id="PS51883">
    <property type="entry name" value="OBG"/>
    <property type="match status" value="1"/>
</dbReference>
<sequence>MRFVDEAVIKAISGNGGHGCVSFRREKFIPRGGPDGGDGGNGGNVVFKASTRLLSLYDFRLKRVYQAENGRPGQGSQMHGRGGKDLVVEMPVGTLVFERGENGAESLIADLSEPDVEVVIAHGGRGGKGNEHFKSSTMQAPRFSQPGEPGEEKSLRLELKILADAGLLGLPNAGKSTFISQVSAAKPKIAAYPFTTLVPNLGVMMDEFDPDRRMVIADIPGLIEGAHEGQGLGHRFLKHVERTRFLVHILSIEDVDMENPWAGFDLINDELQRFDETLGSREQIQVVNKIDLLPPEEVDGLRARAEADGRRIFFISALEGEGLDAVVSEMWRMLAELDRNVPLDSSRQIEPEPEEEFDVEVVWVRE</sequence>
<gene>
    <name evidence="1" type="primary">obg</name>
    <name type="ordered locus">Dde_2690</name>
</gene>
<organism>
    <name type="scientific">Oleidesulfovibrio alaskensis (strain ATCC BAA-1058 / DSM 17464 / G20)</name>
    <name type="common">Desulfovibrio alaskensis</name>
    <dbReference type="NCBI Taxonomy" id="207559"/>
    <lineage>
        <taxon>Bacteria</taxon>
        <taxon>Pseudomonadati</taxon>
        <taxon>Thermodesulfobacteriota</taxon>
        <taxon>Desulfovibrionia</taxon>
        <taxon>Desulfovibrionales</taxon>
        <taxon>Desulfovibrionaceae</taxon>
        <taxon>Oleidesulfovibrio</taxon>
    </lineage>
</organism>
<reference key="1">
    <citation type="journal article" date="2011" name="J. Bacteriol.">
        <title>Complete genome sequence and updated annotation of Desulfovibrio alaskensis G20.</title>
        <authorList>
            <person name="Hauser L.J."/>
            <person name="Land M.L."/>
            <person name="Brown S.D."/>
            <person name="Larimer F."/>
            <person name="Keller K.L."/>
            <person name="Rapp-Giles B.J."/>
            <person name="Price M.N."/>
            <person name="Lin M."/>
            <person name="Bruce D.C."/>
            <person name="Detter J.C."/>
            <person name="Tapia R."/>
            <person name="Han C.S."/>
            <person name="Goodwin L.A."/>
            <person name="Cheng J.F."/>
            <person name="Pitluck S."/>
            <person name="Copeland A."/>
            <person name="Lucas S."/>
            <person name="Nolan M."/>
            <person name="Lapidus A.L."/>
            <person name="Palumbo A.V."/>
            <person name="Wall J.D."/>
        </authorList>
    </citation>
    <scope>NUCLEOTIDE SEQUENCE [LARGE SCALE GENOMIC DNA]</scope>
    <source>
        <strain>ATCC BAA-1058 / DSM 17464 / G20</strain>
    </source>
</reference>
<evidence type="ECO:0000255" key="1">
    <source>
        <dbReference type="HAMAP-Rule" id="MF_01454"/>
    </source>
</evidence>
<evidence type="ECO:0000255" key="2">
    <source>
        <dbReference type="PROSITE-ProRule" id="PRU01231"/>
    </source>
</evidence>
<evidence type="ECO:0000256" key="3">
    <source>
        <dbReference type="SAM" id="MobiDB-lite"/>
    </source>
</evidence>
<feature type="chain" id="PRO_0000385890" description="GTPase Obg">
    <location>
        <begin position="1"/>
        <end position="366"/>
    </location>
</feature>
<feature type="domain" description="Obg" evidence="2">
    <location>
        <begin position="1"/>
        <end position="162"/>
    </location>
</feature>
<feature type="domain" description="OBG-type G" evidence="1">
    <location>
        <begin position="163"/>
        <end position="335"/>
    </location>
</feature>
<feature type="region of interest" description="Disordered" evidence="3">
    <location>
        <begin position="125"/>
        <end position="150"/>
    </location>
</feature>
<feature type="binding site" evidence="1">
    <location>
        <begin position="169"/>
        <end position="176"/>
    </location>
    <ligand>
        <name>GTP</name>
        <dbReference type="ChEBI" id="CHEBI:37565"/>
    </ligand>
</feature>
<feature type="binding site" evidence="1">
    <location>
        <position position="176"/>
    </location>
    <ligand>
        <name>Mg(2+)</name>
        <dbReference type="ChEBI" id="CHEBI:18420"/>
    </ligand>
</feature>
<feature type="binding site" evidence="1">
    <location>
        <begin position="194"/>
        <end position="198"/>
    </location>
    <ligand>
        <name>GTP</name>
        <dbReference type="ChEBI" id="CHEBI:37565"/>
    </ligand>
</feature>
<feature type="binding site" evidence="1">
    <location>
        <position position="196"/>
    </location>
    <ligand>
        <name>Mg(2+)</name>
        <dbReference type="ChEBI" id="CHEBI:18420"/>
    </ligand>
</feature>
<feature type="binding site" evidence="1">
    <location>
        <begin position="218"/>
        <end position="221"/>
    </location>
    <ligand>
        <name>GTP</name>
        <dbReference type="ChEBI" id="CHEBI:37565"/>
    </ligand>
</feature>
<feature type="binding site" evidence="1">
    <location>
        <begin position="288"/>
        <end position="291"/>
    </location>
    <ligand>
        <name>GTP</name>
        <dbReference type="ChEBI" id="CHEBI:37565"/>
    </ligand>
</feature>
<feature type="binding site" evidence="1">
    <location>
        <begin position="316"/>
        <end position="318"/>
    </location>
    <ligand>
        <name>GTP</name>
        <dbReference type="ChEBI" id="CHEBI:37565"/>
    </ligand>
</feature>
<name>OBG_OLEA2</name>
<keyword id="KW-0963">Cytoplasm</keyword>
<keyword id="KW-0342">GTP-binding</keyword>
<keyword id="KW-0378">Hydrolase</keyword>
<keyword id="KW-0460">Magnesium</keyword>
<keyword id="KW-0479">Metal-binding</keyword>
<keyword id="KW-0547">Nucleotide-binding</keyword>
<keyword id="KW-1185">Reference proteome</keyword>
<accession>Q30XW0</accession>
<proteinExistence type="inferred from homology"/>